<gene>
    <name evidence="1" type="primary">prmA</name>
    <name type="ordered locus">Helmi_23640</name>
    <name type="ORF">HM1_2439</name>
</gene>
<organism>
    <name type="scientific">Heliobacterium modesticaldum (strain ATCC 51547 / Ice1)</name>
    <dbReference type="NCBI Taxonomy" id="498761"/>
    <lineage>
        <taxon>Bacteria</taxon>
        <taxon>Bacillati</taxon>
        <taxon>Bacillota</taxon>
        <taxon>Clostridia</taxon>
        <taxon>Eubacteriales</taxon>
        <taxon>Heliobacteriaceae</taxon>
        <taxon>Heliomicrobium</taxon>
    </lineage>
</organism>
<reference key="1">
    <citation type="journal article" date="2008" name="J. Bacteriol.">
        <title>The genome of Heliobacterium modesticaldum, a phototrophic representative of the Firmicutes containing the simplest photosynthetic apparatus.</title>
        <authorList>
            <person name="Sattley W.M."/>
            <person name="Madigan M.T."/>
            <person name="Swingley W.D."/>
            <person name="Cheung P.C."/>
            <person name="Clocksin K.M."/>
            <person name="Conrad A.L."/>
            <person name="Dejesa L.C."/>
            <person name="Honchak B.M."/>
            <person name="Jung D.O."/>
            <person name="Karbach L.E."/>
            <person name="Kurdoglu A."/>
            <person name="Lahiri S."/>
            <person name="Mastrian S.D."/>
            <person name="Page L.E."/>
            <person name="Taylor H.L."/>
            <person name="Wang Z.T."/>
            <person name="Raymond J."/>
            <person name="Chen M."/>
            <person name="Blankenship R.E."/>
            <person name="Touchman J.W."/>
        </authorList>
    </citation>
    <scope>NUCLEOTIDE SEQUENCE [LARGE SCALE GENOMIC DNA]</scope>
    <source>
        <strain>ATCC 51547 / Ice1</strain>
    </source>
</reference>
<dbReference type="EC" id="2.1.1.-" evidence="1"/>
<dbReference type="EMBL" id="CP000930">
    <property type="protein sequence ID" value="ABZ84989.1"/>
    <property type="molecule type" value="Genomic_DNA"/>
</dbReference>
<dbReference type="RefSeq" id="WP_012283486.1">
    <property type="nucleotide sequence ID" value="NC_010337.2"/>
</dbReference>
<dbReference type="SMR" id="B0TAD9"/>
<dbReference type="STRING" id="498761.HM1_2439"/>
<dbReference type="KEGG" id="hmo:HM1_2439"/>
<dbReference type="eggNOG" id="COG2264">
    <property type="taxonomic scope" value="Bacteria"/>
</dbReference>
<dbReference type="HOGENOM" id="CLU_049382_0_1_9"/>
<dbReference type="OrthoDB" id="9785995at2"/>
<dbReference type="Proteomes" id="UP000008550">
    <property type="component" value="Chromosome"/>
</dbReference>
<dbReference type="GO" id="GO:0005737">
    <property type="term" value="C:cytoplasm"/>
    <property type="evidence" value="ECO:0007669"/>
    <property type="project" value="UniProtKB-SubCell"/>
</dbReference>
<dbReference type="GO" id="GO:0016279">
    <property type="term" value="F:protein-lysine N-methyltransferase activity"/>
    <property type="evidence" value="ECO:0007669"/>
    <property type="project" value="RHEA"/>
</dbReference>
<dbReference type="GO" id="GO:0032259">
    <property type="term" value="P:methylation"/>
    <property type="evidence" value="ECO:0007669"/>
    <property type="project" value="UniProtKB-KW"/>
</dbReference>
<dbReference type="CDD" id="cd02440">
    <property type="entry name" value="AdoMet_MTases"/>
    <property type="match status" value="1"/>
</dbReference>
<dbReference type="Gene3D" id="3.40.50.150">
    <property type="entry name" value="Vaccinia Virus protein VP39"/>
    <property type="match status" value="1"/>
</dbReference>
<dbReference type="HAMAP" id="MF_00735">
    <property type="entry name" value="Methyltr_PrmA"/>
    <property type="match status" value="1"/>
</dbReference>
<dbReference type="InterPro" id="IPR050078">
    <property type="entry name" value="Ribosomal_L11_MeTrfase_PrmA"/>
</dbReference>
<dbReference type="InterPro" id="IPR004498">
    <property type="entry name" value="Ribosomal_PrmA_MeTrfase"/>
</dbReference>
<dbReference type="InterPro" id="IPR029063">
    <property type="entry name" value="SAM-dependent_MTases_sf"/>
</dbReference>
<dbReference type="NCBIfam" id="TIGR00406">
    <property type="entry name" value="prmA"/>
    <property type="match status" value="1"/>
</dbReference>
<dbReference type="PANTHER" id="PTHR43648">
    <property type="entry name" value="ELECTRON TRANSFER FLAVOPROTEIN BETA SUBUNIT LYSINE METHYLTRANSFERASE"/>
    <property type="match status" value="1"/>
</dbReference>
<dbReference type="PANTHER" id="PTHR43648:SF1">
    <property type="entry name" value="ELECTRON TRANSFER FLAVOPROTEIN BETA SUBUNIT LYSINE METHYLTRANSFERASE"/>
    <property type="match status" value="1"/>
</dbReference>
<dbReference type="Pfam" id="PF06325">
    <property type="entry name" value="PrmA"/>
    <property type="match status" value="1"/>
</dbReference>
<dbReference type="PIRSF" id="PIRSF000401">
    <property type="entry name" value="RPL11_MTase"/>
    <property type="match status" value="1"/>
</dbReference>
<dbReference type="SUPFAM" id="SSF53335">
    <property type="entry name" value="S-adenosyl-L-methionine-dependent methyltransferases"/>
    <property type="match status" value="1"/>
</dbReference>
<evidence type="ECO:0000255" key="1">
    <source>
        <dbReference type="HAMAP-Rule" id="MF_00735"/>
    </source>
</evidence>
<comment type="function">
    <text evidence="1">Methylates ribosomal protein L11.</text>
</comment>
<comment type="catalytic activity">
    <reaction evidence="1">
        <text>L-lysyl-[protein] + 3 S-adenosyl-L-methionine = N(6),N(6),N(6)-trimethyl-L-lysyl-[protein] + 3 S-adenosyl-L-homocysteine + 3 H(+)</text>
        <dbReference type="Rhea" id="RHEA:54192"/>
        <dbReference type="Rhea" id="RHEA-COMP:9752"/>
        <dbReference type="Rhea" id="RHEA-COMP:13826"/>
        <dbReference type="ChEBI" id="CHEBI:15378"/>
        <dbReference type="ChEBI" id="CHEBI:29969"/>
        <dbReference type="ChEBI" id="CHEBI:57856"/>
        <dbReference type="ChEBI" id="CHEBI:59789"/>
        <dbReference type="ChEBI" id="CHEBI:61961"/>
    </reaction>
</comment>
<comment type="subcellular location">
    <subcellularLocation>
        <location evidence="1">Cytoplasm</location>
    </subcellularLocation>
</comment>
<comment type="similarity">
    <text evidence="1">Belongs to the methyltransferase superfamily. PrmA family.</text>
</comment>
<sequence length="316" mass="34642">MKWREIAITTRQENADAMAEIFEAVGAMGMVIEDPQLIASYIESNVWDLHDVEIPDVPEGMIRVKTYLAIDNTLEERLAALQEELSARERSEKWPAHAWTMTDLHEDDWAHAWKAFFKPEKVGRRVVIRPTWEEYVPKEDDLVISIDPGMAFGTGTHPTTVMCIRALEDYVHAEAHVLDVGTGSGVLSIAAALLGAKRVLAVDNDPVAVATAQENVILNQVDEIVEVRRNDLLSGLSEQADILVANIIADVIIRLAPQAAALLAPEGIMIASGIIQNRLDDVVAAMTEKGFSIEELISHGEWAAIVARRAGVSAEG</sequence>
<name>PRMA_HELMI</name>
<keyword id="KW-0963">Cytoplasm</keyword>
<keyword id="KW-0489">Methyltransferase</keyword>
<keyword id="KW-1185">Reference proteome</keyword>
<keyword id="KW-0949">S-adenosyl-L-methionine</keyword>
<keyword id="KW-0808">Transferase</keyword>
<feature type="chain" id="PRO_1000132801" description="Ribosomal protein L11 methyltransferase">
    <location>
        <begin position="1"/>
        <end position="316"/>
    </location>
</feature>
<feature type="binding site" evidence="1">
    <location>
        <position position="160"/>
    </location>
    <ligand>
        <name>S-adenosyl-L-methionine</name>
        <dbReference type="ChEBI" id="CHEBI:59789"/>
    </ligand>
</feature>
<feature type="binding site" evidence="1">
    <location>
        <position position="181"/>
    </location>
    <ligand>
        <name>S-adenosyl-L-methionine</name>
        <dbReference type="ChEBI" id="CHEBI:59789"/>
    </ligand>
</feature>
<feature type="binding site" evidence="1">
    <location>
        <position position="203"/>
    </location>
    <ligand>
        <name>S-adenosyl-L-methionine</name>
        <dbReference type="ChEBI" id="CHEBI:59789"/>
    </ligand>
</feature>
<feature type="binding site" evidence="1">
    <location>
        <position position="246"/>
    </location>
    <ligand>
        <name>S-adenosyl-L-methionine</name>
        <dbReference type="ChEBI" id="CHEBI:59789"/>
    </ligand>
</feature>
<proteinExistence type="inferred from homology"/>
<accession>B0TAD9</accession>
<protein>
    <recommendedName>
        <fullName evidence="1">Ribosomal protein L11 methyltransferase</fullName>
        <shortName evidence="1">L11 Mtase</shortName>
        <ecNumber evidence="1">2.1.1.-</ecNumber>
    </recommendedName>
</protein>